<evidence type="ECO:0000255" key="1">
    <source>
        <dbReference type="HAMAP-Rule" id="MF_00386"/>
    </source>
</evidence>
<evidence type="ECO:0000256" key="2">
    <source>
        <dbReference type="SAM" id="MobiDB-lite"/>
    </source>
</evidence>
<proteinExistence type="inferred from homology"/>
<name>YIDD_STAAB</name>
<keyword id="KW-1003">Cell membrane</keyword>
<keyword id="KW-0472">Membrane</keyword>
<feature type="chain" id="PRO_0000253173" description="Putative membrane protein insertion efficiency factor">
    <location>
        <begin position="1"/>
        <end position="85"/>
    </location>
</feature>
<feature type="region of interest" description="Disordered" evidence="2">
    <location>
        <begin position="62"/>
        <end position="85"/>
    </location>
</feature>
<gene>
    <name type="ordered locus">SAB1649</name>
</gene>
<accession>Q2YTP2</accession>
<organism>
    <name type="scientific">Staphylococcus aureus (strain bovine RF122 / ET3-1)</name>
    <dbReference type="NCBI Taxonomy" id="273036"/>
    <lineage>
        <taxon>Bacteria</taxon>
        <taxon>Bacillati</taxon>
        <taxon>Bacillota</taxon>
        <taxon>Bacilli</taxon>
        <taxon>Bacillales</taxon>
        <taxon>Staphylococcaceae</taxon>
        <taxon>Staphylococcus</taxon>
    </lineage>
</organism>
<comment type="function">
    <text evidence="1">Could be involved in insertion of integral membrane proteins into the membrane.</text>
</comment>
<comment type="subcellular location">
    <subcellularLocation>
        <location evidence="1">Cell membrane</location>
        <topology evidence="1">Peripheral membrane protein</topology>
        <orientation evidence="1">Cytoplasmic side</orientation>
    </subcellularLocation>
</comment>
<comment type="similarity">
    <text evidence="1">Belongs to the UPF0161 family.</text>
</comment>
<protein>
    <recommendedName>
        <fullName evidence="1">Putative membrane protein insertion efficiency factor</fullName>
    </recommendedName>
</protein>
<sequence length="85" mass="9967">MKKIFLAMIHFYQRFISPLTPPTCRFYPTCSEYTREAIQYHGAFKGLYLGIRRILKCHPLHKGGFDPVPLKKDKSASKHSHKHNH</sequence>
<reference key="1">
    <citation type="journal article" date="2007" name="PLoS ONE">
        <title>Molecular correlates of host specialization in Staphylococcus aureus.</title>
        <authorList>
            <person name="Herron-Olson L."/>
            <person name="Fitzgerald J.R."/>
            <person name="Musser J.M."/>
            <person name="Kapur V."/>
        </authorList>
    </citation>
    <scope>NUCLEOTIDE SEQUENCE [LARGE SCALE GENOMIC DNA]</scope>
    <source>
        <strain>bovine RF122 / ET3-1</strain>
    </source>
</reference>
<dbReference type="EMBL" id="AJ938182">
    <property type="protein sequence ID" value="CAI81338.1"/>
    <property type="molecule type" value="Genomic_DNA"/>
</dbReference>
<dbReference type="KEGG" id="sab:SAB1649"/>
<dbReference type="HOGENOM" id="CLU_144811_6_0_9"/>
<dbReference type="GO" id="GO:0005886">
    <property type="term" value="C:plasma membrane"/>
    <property type="evidence" value="ECO:0007669"/>
    <property type="project" value="UniProtKB-SubCell"/>
</dbReference>
<dbReference type="HAMAP" id="MF_00386">
    <property type="entry name" value="UPF0161_YidD"/>
    <property type="match status" value="1"/>
</dbReference>
<dbReference type="InterPro" id="IPR002696">
    <property type="entry name" value="Membr_insert_effic_factor_YidD"/>
</dbReference>
<dbReference type="NCBIfam" id="TIGR00278">
    <property type="entry name" value="membrane protein insertion efficiency factor YidD"/>
    <property type="match status" value="1"/>
</dbReference>
<dbReference type="PANTHER" id="PTHR33383">
    <property type="entry name" value="MEMBRANE PROTEIN INSERTION EFFICIENCY FACTOR-RELATED"/>
    <property type="match status" value="1"/>
</dbReference>
<dbReference type="PANTHER" id="PTHR33383:SF1">
    <property type="entry name" value="MEMBRANE PROTEIN INSERTION EFFICIENCY FACTOR-RELATED"/>
    <property type="match status" value="1"/>
</dbReference>
<dbReference type="Pfam" id="PF01809">
    <property type="entry name" value="YidD"/>
    <property type="match status" value="1"/>
</dbReference>
<dbReference type="SMART" id="SM01234">
    <property type="entry name" value="Haemolytic"/>
    <property type="match status" value="1"/>
</dbReference>